<comment type="function">
    <text evidence="1">Heme chaperone required for the biogenesis of c-type cytochromes. Transiently binds heme delivered by CcmC and transfers the heme to apo-cytochromes in a process facilitated by CcmF and CcmH.</text>
</comment>
<comment type="subcellular location">
    <subcellularLocation>
        <location evidence="1">Cell inner membrane</location>
        <topology evidence="1">Single-pass type II membrane protein</topology>
        <orientation evidence="1">Periplasmic side</orientation>
    </subcellularLocation>
</comment>
<comment type="similarity">
    <text evidence="1">Belongs to the CcmE/CycJ family.</text>
</comment>
<feature type="chain" id="PRO_0000238857" description="Cytochrome c-type biogenesis protein CcmE">
    <location>
        <begin position="1"/>
        <end position="128"/>
    </location>
</feature>
<feature type="topological domain" description="Cytoplasmic" evidence="1">
    <location>
        <begin position="1"/>
        <end position="8"/>
    </location>
</feature>
<feature type="transmembrane region" description="Helical; Signal-anchor for type II membrane protein" evidence="1">
    <location>
        <begin position="9"/>
        <end position="29"/>
    </location>
</feature>
<feature type="topological domain" description="Periplasmic" evidence="1">
    <location>
        <begin position="30"/>
        <end position="128"/>
    </location>
</feature>
<feature type="binding site" description="covalent" evidence="1">
    <location>
        <position position="120"/>
    </location>
    <ligand>
        <name>heme</name>
        <dbReference type="ChEBI" id="CHEBI:30413"/>
    </ligand>
</feature>
<feature type="binding site" description="axial binding residue" evidence="1">
    <location>
        <position position="124"/>
    </location>
    <ligand>
        <name>heme</name>
        <dbReference type="ChEBI" id="CHEBI:30413"/>
    </ligand>
    <ligandPart>
        <name>Fe</name>
        <dbReference type="ChEBI" id="CHEBI:18248"/>
    </ligandPart>
</feature>
<reference key="1">
    <citation type="journal article" date="1998" name="Nature">
        <title>The genome sequence of Rickettsia prowazekii and the origin of mitochondria.</title>
        <authorList>
            <person name="Andersson S.G.E."/>
            <person name="Zomorodipour A."/>
            <person name="Andersson J.O."/>
            <person name="Sicheritz-Ponten T."/>
            <person name="Alsmark U.C.M."/>
            <person name="Podowski R.M."/>
            <person name="Naeslund A.K."/>
            <person name="Eriksson A.-S."/>
            <person name="Winkler H.H."/>
            <person name="Kurland C.G."/>
        </authorList>
    </citation>
    <scope>NUCLEOTIDE SEQUENCE [LARGE SCALE GENOMIC DNA]</scope>
    <source>
        <strain>Madrid E</strain>
    </source>
</reference>
<name>CCME_RICPR</name>
<sequence>MQKIVRNRLIKIIICFCSACLGISIILYNLEKNIIFFFPPSKINEAEQGKELRVGGLVKRDSINKISANKISFVITDNIKDLEILYQGVLPALFREGQGIIAIGQLSDSKFIARQLLAKHDENYRPPS</sequence>
<accession>Q9ZCW6</accession>
<protein>
    <recommendedName>
        <fullName evidence="1">Cytochrome c-type biogenesis protein CcmE</fullName>
    </recommendedName>
    <alternativeName>
        <fullName evidence="1">Cytochrome c maturation protein E</fullName>
    </alternativeName>
    <alternativeName>
        <fullName evidence="1">Heme chaperone CcmE</fullName>
    </alternativeName>
</protein>
<keyword id="KW-0997">Cell inner membrane</keyword>
<keyword id="KW-1003">Cell membrane</keyword>
<keyword id="KW-0201">Cytochrome c-type biogenesis</keyword>
<keyword id="KW-0349">Heme</keyword>
<keyword id="KW-0408">Iron</keyword>
<keyword id="KW-0472">Membrane</keyword>
<keyword id="KW-0479">Metal-binding</keyword>
<keyword id="KW-1185">Reference proteome</keyword>
<keyword id="KW-0735">Signal-anchor</keyword>
<keyword id="KW-0812">Transmembrane</keyword>
<keyword id="KW-1133">Transmembrane helix</keyword>
<dbReference type="EMBL" id="AJ235272">
    <property type="protein sequence ID" value="CAA15033.1"/>
    <property type="molecule type" value="Genomic_DNA"/>
</dbReference>
<dbReference type="PIR" id="G71663">
    <property type="entry name" value="G71663"/>
</dbReference>
<dbReference type="RefSeq" id="NP_220957.1">
    <property type="nucleotide sequence ID" value="NC_000963.1"/>
</dbReference>
<dbReference type="RefSeq" id="WP_004597913.1">
    <property type="nucleotide sequence ID" value="NC_000963.1"/>
</dbReference>
<dbReference type="SMR" id="Q9ZCW6"/>
<dbReference type="STRING" id="272947.gene:17555668"/>
<dbReference type="EnsemblBacteria" id="CAA15033">
    <property type="protein sequence ID" value="CAA15033"/>
    <property type="gene ID" value="CAA15033"/>
</dbReference>
<dbReference type="GeneID" id="57569714"/>
<dbReference type="KEGG" id="rpr:RP588"/>
<dbReference type="PATRIC" id="fig|272947.5.peg.605"/>
<dbReference type="eggNOG" id="COG2332">
    <property type="taxonomic scope" value="Bacteria"/>
</dbReference>
<dbReference type="HOGENOM" id="CLU_079503_1_1_5"/>
<dbReference type="OrthoDB" id="9793584at2"/>
<dbReference type="Proteomes" id="UP000002480">
    <property type="component" value="Chromosome"/>
</dbReference>
<dbReference type="GO" id="GO:0005886">
    <property type="term" value="C:plasma membrane"/>
    <property type="evidence" value="ECO:0007669"/>
    <property type="project" value="UniProtKB-SubCell"/>
</dbReference>
<dbReference type="GO" id="GO:0020037">
    <property type="term" value="F:heme binding"/>
    <property type="evidence" value="ECO:0007669"/>
    <property type="project" value="InterPro"/>
</dbReference>
<dbReference type="GO" id="GO:0046872">
    <property type="term" value="F:metal ion binding"/>
    <property type="evidence" value="ECO:0007669"/>
    <property type="project" value="UniProtKB-KW"/>
</dbReference>
<dbReference type="GO" id="GO:0017004">
    <property type="term" value="P:cytochrome complex assembly"/>
    <property type="evidence" value="ECO:0007669"/>
    <property type="project" value="UniProtKB-KW"/>
</dbReference>
<dbReference type="Gene3D" id="2.40.50.140">
    <property type="entry name" value="Nucleic acid-binding proteins"/>
    <property type="match status" value="1"/>
</dbReference>
<dbReference type="HAMAP" id="MF_01959">
    <property type="entry name" value="CcmE"/>
    <property type="match status" value="1"/>
</dbReference>
<dbReference type="InterPro" id="IPR004329">
    <property type="entry name" value="CcmE"/>
</dbReference>
<dbReference type="InterPro" id="IPR036127">
    <property type="entry name" value="CcmE-like_sf"/>
</dbReference>
<dbReference type="InterPro" id="IPR012340">
    <property type="entry name" value="NA-bd_OB-fold"/>
</dbReference>
<dbReference type="NCBIfam" id="NF009727">
    <property type="entry name" value="PRK13254.1-1"/>
    <property type="match status" value="1"/>
</dbReference>
<dbReference type="PANTHER" id="PTHR34128">
    <property type="entry name" value="CYTOCHROME C-TYPE BIOGENESIS PROTEIN CCME HOMOLOG, MITOCHONDRIAL"/>
    <property type="match status" value="1"/>
</dbReference>
<dbReference type="PANTHER" id="PTHR34128:SF2">
    <property type="entry name" value="CYTOCHROME C-TYPE BIOGENESIS PROTEIN CCME HOMOLOG, MITOCHONDRIAL"/>
    <property type="match status" value="1"/>
</dbReference>
<dbReference type="Pfam" id="PF03100">
    <property type="entry name" value="CcmE"/>
    <property type="match status" value="1"/>
</dbReference>
<dbReference type="SUPFAM" id="SSF82093">
    <property type="entry name" value="Heme chaperone CcmE"/>
    <property type="match status" value="1"/>
</dbReference>
<gene>
    <name evidence="1" type="primary">ccmE</name>
    <name evidence="1" type="synonym">cycJ</name>
    <name type="ordered locus">RP588</name>
</gene>
<evidence type="ECO:0000255" key="1">
    <source>
        <dbReference type="HAMAP-Rule" id="MF_01959"/>
    </source>
</evidence>
<proteinExistence type="inferred from homology"/>
<organism>
    <name type="scientific">Rickettsia prowazekii (strain Madrid E)</name>
    <dbReference type="NCBI Taxonomy" id="272947"/>
    <lineage>
        <taxon>Bacteria</taxon>
        <taxon>Pseudomonadati</taxon>
        <taxon>Pseudomonadota</taxon>
        <taxon>Alphaproteobacteria</taxon>
        <taxon>Rickettsiales</taxon>
        <taxon>Rickettsiaceae</taxon>
        <taxon>Rickettsieae</taxon>
        <taxon>Rickettsia</taxon>
        <taxon>typhus group</taxon>
    </lineage>
</organism>